<gene>
    <name type="primary">NPH1</name>
</gene>
<evidence type="ECO:0000250" key="1"/>
<evidence type="ECO:0000255" key="2">
    <source>
        <dbReference type="PROSITE-ProRule" id="PRU00541"/>
    </source>
</evidence>
<evidence type="ECO:0000255" key="3">
    <source>
        <dbReference type="PROSITE-ProRule" id="PRU00542"/>
    </source>
</evidence>
<evidence type="ECO:0000305" key="4"/>
<comment type="function">
    <text evidence="1">DNA-dependent ATPase required for providing the needed energy to achieve the termination of early transcripts. Acts in concert with the RAP94 subunit of the virion RNA polymerase and the capping enzyme/VTF to catalyze release of UUUUUNU-containing nascent RNA from the elongation complex. NPH-I must bind ssDNA in order to exhibit ATPase activity (By similarity).</text>
</comment>
<comment type="catalytic activity">
    <reaction>
        <text>a ribonucleoside 5'-triphosphate + H2O = a ribonucleoside 5'-diphosphate + phosphate + H(+)</text>
        <dbReference type="Rhea" id="RHEA:23680"/>
        <dbReference type="ChEBI" id="CHEBI:15377"/>
        <dbReference type="ChEBI" id="CHEBI:15378"/>
        <dbReference type="ChEBI" id="CHEBI:43474"/>
        <dbReference type="ChEBI" id="CHEBI:57930"/>
        <dbReference type="ChEBI" id="CHEBI:61557"/>
        <dbReference type="EC" id="3.6.1.15"/>
    </reaction>
</comment>
<comment type="subunit">
    <text evidence="1">Monomer. Interacts (via C-terminus) with RAP94 (via N-terminus). Interacts with the cap-specific mRNA (nucleoside-2'-O-)-methyltransferase (By similarity).</text>
</comment>
<comment type="subcellular location">
    <subcellularLocation>
        <location evidence="1">Virion</location>
    </subcellularLocation>
    <text evidence="1">Virion core enzyme.</text>
</comment>
<comment type="similarity">
    <text evidence="4">Belongs to the helicase family. NPH I subfamily.</text>
</comment>
<dbReference type="EC" id="3.6.1.15"/>
<dbReference type="EMBL" id="AF027657">
    <property type="protein sequence ID" value="AAC63435.1"/>
    <property type="molecule type" value="Genomic_DNA"/>
</dbReference>
<dbReference type="SMR" id="O91729"/>
<dbReference type="GO" id="GO:0044423">
    <property type="term" value="C:virion component"/>
    <property type="evidence" value="ECO:0007669"/>
    <property type="project" value="UniProtKB-KW"/>
</dbReference>
<dbReference type="GO" id="GO:0005524">
    <property type="term" value="F:ATP binding"/>
    <property type="evidence" value="ECO:0007669"/>
    <property type="project" value="UniProtKB-KW"/>
</dbReference>
<dbReference type="GO" id="GO:0003677">
    <property type="term" value="F:DNA binding"/>
    <property type="evidence" value="ECO:0007669"/>
    <property type="project" value="UniProtKB-KW"/>
</dbReference>
<dbReference type="GO" id="GO:0017111">
    <property type="term" value="F:ribonucleoside triphosphate phosphatase activity"/>
    <property type="evidence" value="ECO:0007669"/>
    <property type="project" value="UniProtKB-EC"/>
</dbReference>
<dbReference type="GO" id="GO:0006351">
    <property type="term" value="P:DNA-templated transcription"/>
    <property type="evidence" value="ECO:0007669"/>
    <property type="project" value="InterPro"/>
</dbReference>
<dbReference type="CDD" id="cd18785">
    <property type="entry name" value="SF2_C"/>
    <property type="match status" value="1"/>
</dbReference>
<dbReference type="Gene3D" id="3.40.50.300">
    <property type="entry name" value="P-loop containing nucleotide triphosphate hydrolases"/>
    <property type="match status" value="2"/>
</dbReference>
<dbReference type="InterPro" id="IPR014001">
    <property type="entry name" value="Helicase_ATP-bd"/>
</dbReference>
<dbReference type="InterPro" id="IPR001650">
    <property type="entry name" value="Helicase_C-like"/>
</dbReference>
<dbReference type="InterPro" id="IPR013676">
    <property type="entry name" value="NPHI_C"/>
</dbReference>
<dbReference type="InterPro" id="IPR027417">
    <property type="entry name" value="P-loop_NTPase"/>
</dbReference>
<dbReference type="InterPro" id="IPR000330">
    <property type="entry name" value="SNF2_N"/>
</dbReference>
<dbReference type="PANTHER" id="PTHR10799">
    <property type="entry name" value="SNF2/RAD54 HELICASE FAMILY"/>
    <property type="match status" value="1"/>
</dbReference>
<dbReference type="Pfam" id="PF00271">
    <property type="entry name" value="Helicase_C"/>
    <property type="match status" value="1"/>
</dbReference>
<dbReference type="Pfam" id="PF08469">
    <property type="entry name" value="NPHI_C"/>
    <property type="match status" value="1"/>
</dbReference>
<dbReference type="Pfam" id="PF00176">
    <property type="entry name" value="SNF2-rel_dom"/>
    <property type="match status" value="1"/>
</dbReference>
<dbReference type="SMART" id="SM00487">
    <property type="entry name" value="DEXDc"/>
    <property type="match status" value="1"/>
</dbReference>
<dbReference type="SMART" id="SM00490">
    <property type="entry name" value="HELICc"/>
    <property type="match status" value="1"/>
</dbReference>
<dbReference type="SUPFAM" id="SSF52540">
    <property type="entry name" value="P-loop containing nucleoside triphosphate hydrolases"/>
    <property type="match status" value="2"/>
</dbReference>
<dbReference type="PROSITE" id="PS51192">
    <property type="entry name" value="HELICASE_ATP_BIND_1"/>
    <property type="match status" value="1"/>
</dbReference>
<dbReference type="PROSITE" id="PS51194">
    <property type="entry name" value="HELICASE_CTER"/>
    <property type="match status" value="1"/>
</dbReference>
<keyword id="KW-0067">ATP-binding</keyword>
<keyword id="KW-0238">DNA-binding</keyword>
<keyword id="KW-0378">Hydrolase</keyword>
<keyword id="KW-0547">Nucleotide-binding</keyword>
<keyword id="KW-0804">Transcription</keyword>
<keyword id="KW-0946">Virion</keyword>
<name>NTP1_CFEPV</name>
<organismHost>
    <name type="scientific">Choristoneura fumiferana</name>
    <name type="common">Spruce budworm moth</name>
    <name type="synonym">Archips fumiferana</name>
    <dbReference type="NCBI Taxonomy" id="7141"/>
</organismHost>
<reference key="1">
    <citation type="journal article" date="1998" name="Virus Res.">
        <title>Characterization of the nucleoside triphosphate phosphohydrolase I gene from the Choristoneura fumiferana entomopoxvirus.</title>
        <authorList>
            <person name="Li X."/>
            <person name="Wallis J.L."/>
            <person name="Barrett J.W."/>
            <person name="Krell P.J."/>
            <person name="Arif B.M."/>
        </authorList>
    </citation>
    <scope>NUCLEOTIDE SEQUENCE [GENOMIC DNA]</scope>
</reference>
<sequence length="647" mass="76048">MFALDSIVGKHINYALDKTQHLPNKINNSITNTEIILQDYQYFASRIFIGLKNLNSMLLFWDTGTGKTLTAVYIIKYIKELFPRWIILIFIKKSLYVDPWLNTISSYISDTSNIKFIYYDSTSSLDKFNNIYRSIESSLNKKNRLLIIIDEVHKLISRSVKKDNSERNFTPIYRKLIKLANYENNKILCMSATPITNNIAEFNNLIGLLRPNVMNIKEEYINNGKLINFKEIRETLLGICSYKRLIEADSLTDTNYIDGYAKKSIFYHNIIMSDEQSKLYNMAERYDYKTELGGLKTMRRLISSFAFYDLKIKGDLDNVEYNEMIKRKLAEFSEFTKNINFSKEFINAFKNNEIKTKTDLLITDINNYNILYQYSCKYIEACRIILNSRGKVLLFEPLVNFEGISSLKYYFNCFNISYIEYSSKTIKMRDNDLNYYNNYENNDGNKIKVCIFSYAGSEGISFKCINDIIILDMPWNESELKQIIGRSIRLNSHEYLPINYRYVNVHFIISYSNNRKSVDKEILDIIKNKQGKINVVFDLLKASPIEIIHNMYKYIEPVDNEIIFETIRKTRMKEMNISNVIINLKLYPITYCKDYDRATILKGLLNKDTNIIYDNDTPVAILLVDNNNLPIFVIENDILIYITNDYY</sequence>
<protein>
    <recommendedName>
        <fullName>Nucleoside triphosphatase I</fullName>
        <ecNumber>3.6.1.15</ecNumber>
    </recommendedName>
    <alternativeName>
        <fullName>NPH-I</fullName>
    </alternativeName>
    <alternativeName>
        <fullName>Nucleoside triphosphate phosphohydrolase I</fullName>
        <shortName>NPH I</shortName>
    </alternativeName>
</protein>
<accession>O91729</accession>
<organism>
    <name type="scientific">Choristoneura fumiferana entomopoxvirus</name>
    <name type="common">CfEPV</name>
    <dbReference type="NCBI Taxonomy" id="28322"/>
    <lineage>
        <taxon>Viruses</taxon>
        <taxon>Varidnaviria</taxon>
        <taxon>Bamfordvirae</taxon>
        <taxon>Nucleocytoviricota</taxon>
        <taxon>Pokkesviricetes</taxon>
        <taxon>Chitovirales</taxon>
        <taxon>Poxviridae</taxon>
        <taxon>Entomopoxvirinae</taxon>
        <taxon>Betaentomopoxvirus</taxon>
    </lineage>
</organism>
<feature type="chain" id="PRO_0000099101" description="Nucleoside triphosphatase I">
    <location>
        <begin position="1"/>
        <end position="647"/>
    </location>
</feature>
<feature type="domain" description="Helicase ATP-binding" evidence="2">
    <location>
        <begin position="48"/>
        <end position="212"/>
    </location>
</feature>
<feature type="domain" description="Helicase C-terminal" evidence="3">
    <location>
        <begin position="378"/>
        <end position="541"/>
    </location>
</feature>
<feature type="region of interest" description="Binding to the cap-specific mRNA (nucleoside-2'-O-)-methyltransferase" evidence="1">
    <location>
        <begin position="467"/>
        <end position="533"/>
    </location>
</feature>
<feature type="short sequence motif" description="DEXH box">
    <location>
        <begin position="150"/>
        <end position="153"/>
    </location>
</feature>
<feature type="binding site" evidence="2">
    <location>
        <begin position="61"/>
        <end position="68"/>
    </location>
    <ligand>
        <name>ATP</name>
        <dbReference type="ChEBI" id="CHEBI:30616"/>
    </ligand>
</feature>
<proteinExistence type="inferred from homology"/>